<sequence>MNLAVIGAGIAVLTGLGAGIGIGIATGRATEAIARQPEAASKIQTALIIGAGLAEATAIYGLIIAFMILTK</sequence>
<reference key="1">
    <citation type="submission" date="2008-04" db="EMBL/GenBank/DDBJ databases">
        <title>Complete sequence of Clostridium botulinum strain Eklund.</title>
        <authorList>
            <person name="Brinkac L.M."/>
            <person name="Brown J.L."/>
            <person name="Bruce D."/>
            <person name="Detter C."/>
            <person name="Munk C."/>
            <person name="Smith L.A."/>
            <person name="Smith T.J."/>
            <person name="Sutton G."/>
            <person name="Brettin T.S."/>
        </authorList>
    </citation>
    <scope>NUCLEOTIDE SEQUENCE [LARGE SCALE GENOMIC DNA]</scope>
    <source>
        <strain>Eklund 17B / Type B</strain>
    </source>
</reference>
<proteinExistence type="inferred from homology"/>
<dbReference type="EMBL" id="CP001056">
    <property type="protein sequence ID" value="ACD23893.1"/>
    <property type="molecule type" value="Genomic_DNA"/>
</dbReference>
<dbReference type="SMR" id="B2TJZ5"/>
<dbReference type="KEGG" id="cbk:CLL_A0493"/>
<dbReference type="PATRIC" id="fig|935198.13.peg.448"/>
<dbReference type="HOGENOM" id="CLU_148047_2_1_9"/>
<dbReference type="Proteomes" id="UP000001195">
    <property type="component" value="Chromosome"/>
</dbReference>
<dbReference type="GO" id="GO:0005886">
    <property type="term" value="C:plasma membrane"/>
    <property type="evidence" value="ECO:0007669"/>
    <property type="project" value="UniProtKB-SubCell"/>
</dbReference>
<dbReference type="GO" id="GO:0045259">
    <property type="term" value="C:proton-transporting ATP synthase complex"/>
    <property type="evidence" value="ECO:0007669"/>
    <property type="project" value="UniProtKB-KW"/>
</dbReference>
<dbReference type="GO" id="GO:0033177">
    <property type="term" value="C:proton-transporting two-sector ATPase complex, proton-transporting domain"/>
    <property type="evidence" value="ECO:0007669"/>
    <property type="project" value="InterPro"/>
</dbReference>
<dbReference type="GO" id="GO:0008289">
    <property type="term" value="F:lipid binding"/>
    <property type="evidence" value="ECO:0007669"/>
    <property type="project" value="UniProtKB-KW"/>
</dbReference>
<dbReference type="GO" id="GO:0046933">
    <property type="term" value="F:proton-transporting ATP synthase activity, rotational mechanism"/>
    <property type="evidence" value="ECO:0007669"/>
    <property type="project" value="UniProtKB-UniRule"/>
</dbReference>
<dbReference type="FunFam" id="1.20.20.10:FF:000004">
    <property type="entry name" value="ATP synthase subunit c"/>
    <property type="match status" value="1"/>
</dbReference>
<dbReference type="Gene3D" id="1.20.20.10">
    <property type="entry name" value="F1F0 ATP synthase subunit C"/>
    <property type="match status" value="1"/>
</dbReference>
<dbReference type="HAMAP" id="MF_01396">
    <property type="entry name" value="ATP_synth_c_bact"/>
    <property type="match status" value="1"/>
</dbReference>
<dbReference type="InterPro" id="IPR005953">
    <property type="entry name" value="ATP_synth_csu_bac/chlpt"/>
</dbReference>
<dbReference type="InterPro" id="IPR000454">
    <property type="entry name" value="ATP_synth_F0_csu"/>
</dbReference>
<dbReference type="InterPro" id="IPR020537">
    <property type="entry name" value="ATP_synth_F0_csu_DDCD_BS"/>
</dbReference>
<dbReference type="InterPro" id="IPR038662">
    <property type="entry name" value="ATP_synth_F0_csu_sf"/>
</dbReference>
<dbReference type="InterPro" id="IPR002379">
    <property type="entry name" value="ATPase_proteolipid_c-like_dom"/>
</dbReference>
<dbReference type="InterPro" id="IPR035921">
    <property type="entry name" value="F/V-ATP_Csub_sf"/>
</dbReference>
<dbReference type="NCBIfam" id="TIGR01260">
    <property type="entry name" value="ATP_synt_c"/>
    <property type="match status" value="1"/>
</dbReference>
<dbReference type="PANTHER" id="PTHR10031">
    <property type="entry name" value="ATP SYNTHASE LIPID-BINDING PROTEIN, MITOCHONDRIAL"/>
    <property type="match status" value="1"/>
</dbReference>
<dbReference type="PANTHER" id="PTHR10031:SF0">
    <property type="entry name" value="ATPASE PROTEIN 9"/>
    <property type="match status" value="1"/>
</dbReference>
<dbReference type="Pfam" id="PF00137">
    <property type="entry name" value="ATP-synt_C"/>
    <property type="match status" value="1"/>
</dbReference>
<dbReference type="PRINTS" id="PR00124">
    <property type="entry name" value="ATPASEC"/>
</dbReference>
<dbReference type="SUPFAM" id="SSF81333">
    <property type="entry name" value="F1F0 ATP synthase subunit C"/>
    <property type="match status" value="1"/>
</dbReference>
<dbReference type="PROSITE" id="PS00605">
    <property type="entry name" value="ATPASE_C"/>
    <property type="match status" value="1"/>
</dbReference>
<organism>
    <name type="scientific">Clostridium botulinum (strain Eklund 17B / Type B)</name>
    <dbReference type="NCBI Taxonomy" id="935198"/>
    <lineage>
        <taxon>Bacteria</taxon>
        <taxon>Bacillati</taxon>
        <taxon>Bacillota</taxon>
        <taxon>Clostridia</taxon>
        <taxon>Eubacteriales</taxon>
        <taxon>Clostridiaceae</taxon>
        <taxon>Clostridium</taxon>
    </lineage>
</organism>
<name>ATPL_CLOBB</name>
<keyword id="KW-0066">ATP synthesis</keyword>
<keyword id="KW-1003">Cell membrane</keyword>
<keyword id="KW-0138">CF(0)</keyword>
<keyword id="KW-0375">Hydrogen ion transport</keyword>
<keyword id="KW-0406">Ion transport</keyword>
<keyword id="KW-0446">Lipid-binding</keyword>
<keyword id="KW-0472">Membrane</keyword>
<keyword id="KW-0812">Transmembrane</keyword>
<keyword id="KW-1133">Transmembrane helix</keyword>
<keyword id="KW-0813">Transport</keyword>
<gene>
    <name evidence="1" type="primary">atpE</name>
    <name type="ordered locus">CLL_A0493</name>
</gene>
<accession>B2TJZ5</accession>
<feature type="chain" id="PRO_0000365867" description="ATP synthase subunit c">
    <location>
        <begin position="1"/>
        <end position="71"/>
    </location>
</feature>
<feature type="transmembrane region" description="Helical" evidence="1">
    <location>
        <begin position="4"/>
        <end position="24"/>
    </location>
</feature>
<feature type="transmembrane region" description="Helical" evidence="1">
    <location>
        <begin position="48"/>
        <end position="68"/>
    </location>
</feature>
<feature type="site" description="Reversibly protonated during proton transport" evidence="1">
    <location>
        <position position="55"/>
    </location>
</feature>
<evidence type="ECO:0000255" key="1">
    <source>
        <dbReference type="HAMAP-Rule" id="MF_01396"/>
    </source>
</evidence>
<protein>
    <recommendedName>
        <fullName evidence="1">ATP synthase subunit c</fullName>
    </recommendedName>
    <alternativeName>
        <fullName evidence="1">ATP synthase F(0) sector subunit c</fullName>
    </alternativeName>
    <alternativeName>
        <fullName evidence="1">F-type ATPase subunit c</fullName>
        <shortName evidence="1">F-ATPase subunit c</shortName>
    </alternativeName>
    <alternativeName>
        <fullName evidence="1">Lipid-binding protein</fullName>
    </alternativeName>
</protein>
<comment type="function">
    <text evidence="1">F(1)F(0) ATP synthase produces ATP from ADP in the presence of a proton or sodium gradient. F-type ATPases consist of two structural domains, F(1) containing the extramembraneous catalytic core and F(0) containing the membrane proton channel, linked together by a central stalk and a peripheral stalk. During catalysis, ATP synthesis in the catalytic domain of F(1) is coupled via a rotary mechanism of the central stalk subunits to proton translocation.</text>
</comment>
<comment type="function">
    <text evidence="1">Key component of the F(0) channel; it plays a direct role in translocation across the membrane. A homomeric c-ring of between 10-14 subunits forms the central stalk rotor element with the F(1) delta and epsilon subunits.</text>
</comment>
<comment type="subunit">
    <text evidence="1">F-type ATPases have 2 components, F(1) - the catalytic core - and F(0) - the membrane proton channel. F(1) has five subunits: alpha(3), beta(3), gamma(1), delta(1), epsilon(1). F(0) has three main subunits: a(1), b(2) and c(10-14). The alpha and beta chains form an alternating ring which encloses part of the gamma chain. F(1) is attached to F(0) by a central stalk formed by the gamma and epsilon chains, while a peripheral stalk is formed by the delta and b chains.</text>
</comment>
<comment type="subcellular location">
    <subcellularLocation>
        <location evidence="1">Cell membrane</location>
        <topology evidence="1">Multi-pass membrane protein</topology>
    </subcellularLocation>
</comment>
<comment type="similarity">
    <text evidence="1">Belongs to the ATPase C chain family.</text>
</comment>